<evidence type="ECO:0000250" key="1">
    <source>
        <dbReference type="UniProtKB" id="P43636"/>
    </source>
</evidence>
<evidence type="ECO:0000255" key="2"/>
<evidence type="ECO:0000305" key="3"/>
<sequence>MAAGVDEKDKKTIVFLHPDLGIGGAERLVVDAAVGLQNRGHKVVIFTSHCDPRHCFDEARDGTLDVRVRGNSIIPPSLLGRFSILCAILRQLHLILQITLLTSELRTLSPSAFFVDQLSAGLPLLKLLVPTSPIFFYCHFPDLLLVQGRQTWYKRLYRLPFDTWEEWSMGFADSIAVNSSFTKGIVSHTWPSLASKRSLEVVHPCIDVRSTSDSSQNPNDDDKDVLPWTKTGIILSINRFERKKDIALAIKAFASLSPEQRGKAKLIIAGGYDNRVHENVSYHMDLVDLAEGAPYHLKTATAKTVVSALNTSPDVEVLFLLSVPNTLKEILLRSAKLLVYTPSNEHFGIVPLEAMLRGVPVLAANNGGPTETVVEGETGWLRDPNDVGEWAKVMDKVLNGMGEEELKRMGKKGVERVKGRFADTQMAERLEEIIERMPKGDAAQSGMILLVVGAAVAAVAGVISAVYWKLW</sequence>
<accession>Q8X0H8</accession>
<accession>Q1K4N5</accession>
<organism>
    <name type="scientific">Neurospora crassa (strain ATCC 24698 / 74-OR23-1A / CBS 708.71 / DSM 1257 / FGSC 987)</name>
    <dbReference type="NCBI Taxonomy" id="367110"/>
    <lineage>
        <taxon>Eukaryota</taxon>
        <taxon>Fungi</taxon>
        <taxon>Dikarya</taxon>
        <taxon>Ascomycota</taxon>
        <taxon>Pezizomycotina</taxon>
        <taxon>Sordariomycetes</taxon>
        <taxon>Sordariomycetidae</taxon>
        <taxon>Sordariales</taxon>
        <taxon>Sordariaceae</taxon>
        <taxon>Neurospora</taxon>
    </lineage>
</organism>
<proteinExistence type="inferred from homology"/>
<feature type="chain" id="PRO_0000080267" description="Alpha-1,3/1,6-mannosyltransferase alg-2">
    <location>
        <begin position="1"/>
        <end position="471"/>
    </location>
</feature>
<feature type="transmembrane region" description="Helical" evidence="2">
    <location>
        <begin position="446"/>
        <end position="466"/>
    </location>
</feature>
<feature type="glycosylation site" description="N-linked (GlcNAc...) asparagine" evidence="2">
    <location>
        <position position="178"/>
    </location>
</feature>
<feature type="glycosylation site" description="N-linked (GlcNAc...) asparagine" evidence="2">
    <location>
        <position position="279"/>
    </location>
</feature>
<reference key="1">
    <citation type="journal article" date="2003" name="Nucleic Acids Res.">
        <title>What's in the genome of a filamentous fungus? Analysis of the Neurospora genome sequence.</title>
        <authorList>
            <person name="Mannhaupt G."/>
            <person name="Montrone C."/>
            <person name="Haase D."/>
            <person name="Mewes H.-W."/>
            <person name="Aign V."/>
            <person name="Hoheisel J.D."/>
            <person name="Fartmann B."/>
            <person name="Nyakatura G."/>
            <person name="Kempken F."/>
            <person name="Maier J."/>
            <person name="Schulte U."/>
        </authorList>
    </citation>
    <scope>NUCLEOTIDE SEQUENCE [LARGE SCALE GENOMIC DNA]</scope>
    <source>
        <strain>ATCC 24698 / 74-OR23-1A / CBS 708.71 / DSM 1257 / FGSC 987</strain>
    </source>
</reference>
<reference key="2">
    <citation type="journal article" date="2003" name="Nature">
        <title>The genome sequence of the filamentous fungus Neurospora crassa.</title>
        <authorList>
            <person name="Galagan J.E."/>
            <person name="Calvo S.E."/>
            <person name="Borkovich K.A."/>
            <person name="Selker E.U."/>
            <person name="Read N.D."/>
            <person name="Jaffe D.B."/>
            <person name="FitzHugh W."/>
            <person name="Ma L.-J."/>
            <person name="Smirnov S."/>
            <person name="Purcell S."/>
            <person name="Rehman B."/>
            <person name="Elkins T."/>
            <person name="Engels R."/>
            <person name="Wang S."/>
            <person name="Nielsen C.B."/>
            <person name="Butler J."/>
            <person name="Endrizzi M."/>
            <person name="Qui D."/>
            <person name="Ianakiev P."/>
            <person name="Bell-Pedersen D."/>
            <person name="Nelson M.A."/>
            <person name="Werner-Washburne M."/>
            <person name="Selitrennikoff C.P."/>
            <person name="Kinsey J.A."/>
            <person name="Braun E.L."/>
            <person name="Zelter A."/>
            <person name="Schulte U."/>
            <person name="Kothe G.O."/>
            <person name="Jedd G."/>
            <person name="Mewes H.-W."/>
            <person name="Staben C."/>
            <person name="Marcotte E."/>
            <person name="Greenberg D."/>
            <person name="Roy A."/>
            <person name="Foley K."/>
            <person name="Naylor J."/>
            <person name="Stange-Thomann N."/>
            <person name="Barrett R."/>
            <person name="Gnerre S."/>
            <person name="Kamal M."/>
            <person name="Kamvysselis M."/>
            <person name="Mauceli E.W."/>
            <person name="Bielke C."/>
            <person name="Rudd S."/>
            <person name="Frishman D."/>
            <person name="Krystofova S."/>
            <person name="Rasmussen C."/>
            <person name="Metzenberg R.L."/>
            <person name="Perkins D.D."/>
            <person name="Kroken S."/>
            <person name="Cogoni C."/>
            <person name="Macino G."/>
            <person name="Catcheside D.E.A."/>
            <person name="Li W."/>
            <person name="Pratt R.J."/>
            <person name="Osmani S.A."/>
            <person name="DeSouza C.P.C."/>
            <person name="Glass N.L."/>
            <person name="Orbach M.J."/>
            <person name="Berglund J.A."/>
            <person name="Voelker R."/>
            <person name="Yarden O."/>
            <person name="Plamann M."/>
            <person name="Seiler S."/>
            <person name="Dunlap J.C."/>
            <person name="Radford A."/>
            <person name="Aramayo R."/>
            <person name="Natvig D.O."/>
            <person name="Alex L.A."/>
            <person name="Mannhaupt G."/>
            <person name="Ebbole D.J."/>
            <person name="Freitag M."/>
            <person name="Paulsen I."/>
            <person name="Sachs M.S."/>
            <person name="Lander E.S."/>
            <person name="Nusbaum C."/>
            <person name="Birren B.W."/>
        </authorList>
    </citation>
    <scope>NUCLEOTIDE SEQUENCE [LARGE SCALE GENOMIC DNA]</scope>
    <source>
        <strain>ATCC 24698 / 74-OR23-1A / CBS 708.71 / DSM 1257 / FGSC 987</strain>
    </source>
</reference>
<dbReference type="EC" id="2.4.1.132" evidence="1"/>
<dbReference type="EC" id="2.4.1.257" evidence="1"/>
<dbReference type="EMBL" id="AL669987">
    <property type="protein sequence ID" value="CAD21070.1"/>
    <property type="molecule type" value="Genomic_DNA"/>
</dbReference>
<dbReference type="EMBL" id="CM002237">
    <property type="protein sequence ID" value="EAA26604.1"/>
    <property type="molecule type" value="Genomic_DNA"/>
</dbReference>
<dbReference type="SMR" id="Q8X0H8"/>
<dbReference type="FunCoup" id="Q8X0H8">
    <property type="interactions" value="706"/>
</dbReference>
<dbReference type="STRING" id="367110.Q8X0H8"/>
<dbReference type="CAZy" id="GT4">
    <property type="family name" value="Glycosyltransferase Family 4"/>
</dbReference>
<dbReference type="GlyCosmos" id="Q8X0H8">
    <property type="glycosylation" value="2 sites, No reported glycans"/>
</dbReference>
<dbReference type="PaxDb" id="5141-EFNCRP00000002507"/>
<dbReference type="EnsemblFungi" id="EAA26604">
    <property type="protein sequence ID" value="EAA26604"/>
    <property type="gene ID" value="NCU03503"/>
</dbReference>
<dbReference type="KEGG" id="ncr:NCU03503"/>
<dbReference type="VEuPathDB" id="FungiDB:NCU03503"/>
<dbReference type="HOGENOM" id="CLU_030619_0_0_1"/>
<dbReference type="InParanoid" id="Q8X0H8"/>
<dbReference type="OMA" id="AMYMKCP"/>
<dbReference type="OrthoDB" id="448893at2759"/>
<dbReference type="UniPathway" id="UPA00378"/>
<dbReference type="Proteomes" id="UP000001805">
    <property type="component" value="Chromosome 6, Linkage Group II"/>
</dbReference>
<dbReference type="GO" id="GO:0012505">
    <property type="term" value="C:endomembrane system"/>
    <property type="evidence" value="ECO:0000318"/>
    <property type="project" value="GO_Central"/>
</dbReference>
<dbReference type="GO" id="GO:0005789">
    <property type="term" value="C:endoplasmic reticulum membrane"/>
    <property type="evidence" value="ECO:0007669"/>
    <property type="project" value="UniProtKB-SubCell"/>
</dbReference>
<dbReference type="GO" id="GO:0000033">
    <property type="term" value="F:alpha-1,3-mannosyltransferase activity"/>
    <property type="evidence" value="ECO:0000318"/>
    <property type="project" value="GO_Central"/>
</dbReference>
<dbReference type="GO" id="GO:0004378">
    <property type="term" value="F:GDP-Man:Man1GlcNAc2-PP-Dol alpha-1,3-mannosyltransferase activity"/>
    <property type="evidence" value="ECO:0007669"/>
    <property type="project" value="UniProtKB-EC"/>
</dbReference>
<dbReference type="GO" id="GO:0102704">
    <property type="term" value="F:GDP-Man:Man2GlcNAc2-PP-dolichol alpha-1,6-mannosyltransferase activity"/>
    <property type="evidence" value="ECO:0007669"/>
    <property type="project" value="UniProtKB-EC"/>
</dbReference>
<dbReference type="GO" id="GO:0006488">
    <property type="term" value="P:dolichol-linked oligosaccharide biosynthetic process"/>
    <property type="evidence" value="ECO:0000318"/>
    <property type="project" value="GO_Central"/>
</dbReference>
<dbReference type="CDD" id="cd03805">
    <property type="entry name" value="GT4_ALG2-like"/>
    <property type="match status" value="1"/>
</dbReference>
<dbReference type="FunFam" id="3.40.50.2000:FF:000240">
    <property type="entry name" value="Alpha-1,2-mannosyltransferase (Alg2)"/>
    <property type="match status" value="1"/>
</dbReference>
<dbReference type="Gene3D" id="3.40.50.2000">
    <property type="entry name" value="Glycogen Phosphorylase B"/>
    <property type="match status" value="2"/>
</dbReference>
<dbReference type="InterPro" id="IPR027054">
    <property type="entry name" value="ALG2"/>
</dbReference>
<dbReference type="InterPro" id="IPR001296">
    <property type="entry name" value="Glyco_trans_1"/>
</dbReference>
<dbReference type="InterPro" id="IPR028098">
    <property type="entry name" value="Glyco_trans_4-like_N"/>
</dbReference>
<dbReference type="PANTHER" id="PTHR45918">
    <property type="entry name" value="ALPHA-1,3/1,6-MANNOSYLTRANSFERASE ALG2"/>
    <property type="match status" value="1"/>
</dbReference>
<dbReference type="PANTHER" id="PTHR45918:SF1">
    <property type="entry name" value="ALPHA-1,3_1,6-MANNOSYLTRANSFERASE ALG2"/>
    <property type="match status" value="1"/>
</dbReference>
<dbReference type="Pfam" id="PF13439">
    <property type="entry name" value="Glyco_transf_4"/>
    <property type="match status" value="1"/>
</dbReference>
<dbReference type="Pfam" id="PF00534">
    <property type="entry name" value="Glycos_transf_1"/>
    <property type="match status" value="1"/>
</dbReference>
<dbReference type="SUPFAM" id="SSF53756">
    <property type="entry name" value="UDP-Glycosyltransferase/glycogen phosphorylase"/>
    <property type="match status" value="1"/>
</dbReference>
<gene>
    <name type="primary">alg-2</name>
    <name type="ORF">B12N19.090</name>
    <name type="ORF">NCU03503</name>
</gene>
<keyword id="KW-0256">Endoplasmic reticulum</keyword>
<keyword id="KW-0325">Glycoprotein</keyword>
<keyword id="KW-0328">Glycosyltransferase</keyword>
<keyword id="KW-0472">Membrane</keyword>
<keyword id="KW-1185">Reference proteome</keyword>
<keyword id="KW-0808">Transferase</keyword>
<keyword id="KW-0812">Transmembrane</keyword>
<keyword id="KW-1133">Transmembrane helix</keyword>
<name>ALG2_NEUCR</name>
<protein>
    <recommendedName>
        <fullName>Alpha-1,3/1,6-mannosyltransferase alg-2</fullName>
        <ecNumber evidence="1">2.4.1.132</ecNumber>
        <ecNumber evidence="1">2.4.1.257</ecNumber>
    </recommendedName>
    <alternativeName>
        <fullName>Asparagine-linked glycosylation protein 2</fullName>
    </alternativeName>
    <alternativeName>
        <fullName>GDP-Man:Man(1)GlcNAc(2)-PP-Dol alpha-1,3-mannosyltransferase</fullName>
    </alternativeName>
    <alternativeName>
        <fullName>GDP-Man:Man(1)GlcNAc(2)-PP-dolichol mannosyltransferase</fullName>
    </alternativeName>
    <alternativeName>
        <fullName>GDP-Man:Man(2)GlcNAc(2)-PP-Dol alpha-1,6-mannosyltransferase</fullName>
    </alternativeName>
</protein>
<comment type="function">
    <text evidence="1">Mannosylates Man(2)GlcNAc(2)-dolichol diphosphate and Man(1)GlcNAc(2)-dolichol diphosphate to form Man(3)GlcNAc(2)-dolichol diphosphate.</text>
</comment>
<comment type="catalytic activity">
    <reaction evidence="1">
        <text>a beta-D-Man-(1-&gt;4)-beta-D-GlcNAc-(1-&gt;4)-alpha-D-GlcNAc-diphospho-di-trans,poly-cis-dolichol + GDP-alpha-D-mannose = an alpha-D-Man-(1-&gt;3)-beta-D-Man-(1-&gt;4)-beta-D-GlcNAc-(1-&gt;4)-alpha-D-GlcNAc-diphospho-di-trans,poly-cis-dolichol + GDP + H(+)</text>
        <dbReference type="Rhea" id="RHEA:29515"/>
        <dbReference type="Rhea" id="RHEA-COMP:19511"/>
        <dbReference type="Rhea" id="RHEA-COMP:19513"/>
        <dbReference type="ChEBI" id="CHEBI:15378"/>
        <dbReference type="ChEBI" id="CHEBI:57527"/>
        <dbReference type="ChEBI" id="CHEBI:58189"/>
        <dbReference type="ChEBI" id="CHEBI:58472"/>
        <dbReference type="ChEBI" id="CHEBI:132510"/>
        <dbReference type="EC" id="2.4.1.132"/>
    </reaction>
    <physiologicalReaction direction="left-to-right" evidence="1">
        <dbReference type="Rhea" id="RHEA:29516"/>
    </physiologicalReaction>
</comment>
<comment type="catalytic activity">
    <reaction evidence="1">
        <text>an alpha-D-Man-(1-&gt;3)-beta-D-Man-(1-&gt;4)-beta-D-GlcNAc-(1-&gt;4)-alpha-D-GlcNAc-diphospho-di-trans,poly-cis-dolichol + GDP-alpha-D-mannose = an alpha-D-Man-(1-&gt;3)-[alpha-D-Man-(1-&gt;6)]-beta-D-Man-(1-&gt;4)-beta-D-GlcNAc-(1-&gt;4)-alpha-D-GlcNAc-diphospho-di-trans,poly-cis-dolichol + GDP + H(+)</text>
        <dbReference type="Rhea" id="RHEA:29519"/>
        <dbReference type="Rhea" id="RHEA-COMP:19513"/>
        <dbReference type="Rhea" id="RHEA-COMP:19515"/>
        <dbReference type="ChEBI" id="CHEBI:15378"/>
        <dbReference type="ChEBI" id="CHEBI:57527"/>
        <dbReference type="ChEBI" id="CHEBI:58189"/>
        <dbReference type="ChEBI" id="CHEBI:132510"/>
        <dbReference type="ChEBI" id="CHEBI:132511"/>
        <dbReference type="EC" id="2.4.1.257"/>
    </reaction>
    <physiologicalReaction direction="left-to-right" evidence="1">
        <dbReference type="Rhea" id="RHEA:29520"/>
    </physiologicalReaction>
</comment>
<comment type="pathway">
    <text evidence="1">Protein modification; protein glycosylation.</text>
</comment>
<comment type="subcellular location">
    <subcellularLocation>
        <location evidence="1">Endoplasmic reticulum membrane</location>
        <topology evidence="2">Single-pass membrane protein</topology>
    </subcellularLocation>
</comment>
<comment type="similarity">
    <text evidence="3">Belongs to the glycosyltransferase group 1 family. Glycosyltransferase 4 subfamily.</text>
</comment>